<dbReference type="EC" id="3.6.1.41" evidence="1"/>
<dbReference type="EMBL" id="AE008922">
    <property type="protein sequence ID" value="AAM40104.1"/>
    <property type="molecule type" value="Genomic_DNA"/>
</dbReference>
<dbReference type="RefSeq" id="NP_636180.1">
    <property type="nucleotide sequence ID" value="NC_003902.1"/>
</dbReference>
<dbReference type="RefSeq" id="WP_011036025.1">
    <property type="nucleotide sequence ID" value="NC_003902.1"/>
</dbReference>
<dbReference type="SMR" id="Q8PCE5"/>
<dbReference type="STRING" id="190485.XCC0789"/>
<dbReference type="EnsemblBacteria" id="AAM40104">
    <property type="protein sequence ID" value="AAM40104"/>
    <property type="gene ID" value="XCC0789"/>
</dbReference>
<dbReference type="KEGG" id="xcc:XCC0789"/>
<dbReference type="PATRIC" id="fig|190485.4.peg.859"/>
<dbReference type="eggNOG" id="COG0639">
    <property type="taxonomic scope" value="Bacteria"/>
</dbReference>
<dbReference type="HOGENOM" id="CLU_056184_0_0_6"/>
<dbReference type="OrthoDB" id="9807890at2"/>
<dbReference type="Proteomes" id="UP000001010">
    <property type="component" value="Chromosome"/>
</dbReference>
<dbReference type="GO" id="GO:0005737">
    <property type="term" value="C:cytoplasm"/>
    <property type="evidence" value="ECO:0000318"/>
    <property type="project" value="GO_Central"/>
</dbReference>
<dbReference type="GO" id="GO:0008803">
    <property type="term" value="F:bis(5'-nucleosyl)-tetraphosphatase (symmetrical) activity"/>
    <property type="evidence" value="ECO:0000318"/>
    <property type="project" value="GO_Central"/>
</dbReference>
<dbReference type="GO" id="GO:0016791">
    <property type="term" value="F:phosphatase activity"/>
    <property type="evidence" value="ECO:0000318"/>
    <property type="project" value="GO_Central"/>
</dbReference>
<dbReference type="GO" id="GO:0110154">
    <property type="term" value="P:RNA decapping"/>
    <property type="evidence" value="ECO:0000318"/>
    <property type="project" value="GO_Central"/>
</dbReference>
<dbReference type="CDD" id="cd07422">
    <property type="entry name" value="MPP_ApaH"/>
    <property type="match status" value="1"/>
</dbReference>
<dbReference type="Gene3D" id="3.60.21.10">
    <property type="match status" value="1"/>
</dbReference>
<dbReference type="HAMAP" id="MF_00199">
    <property type="entry name" value="ApaH"/>
    <property type="match status" value="1"/>
</dbReference>
<dbReference type="InterPro" id="IPR004617">
    <property type="entry name" value="ApaH"/>
</dbReference>
<dbReference type="InterPro" id="IPR004843">
    <property type="entry name" value="Calcineurin-like_PHP_ApaH"/>
</dbReference>
<dbReference type="InterPro" id="IPR029052">
    <property type="entry name" value="Metallo-depent_PP-like"/>
</dbReference>
<dbReference type="NCBIfam" id="TIGR00668">
    <property type="entry name" value="apaH"/>
    <property type="match status" value="1"/>
</dbReference>
<dbReference type="NCBIfam" id="NF001204">
    <property type="entry name" value="PRK00166.1"/>
    <property type="match status" value="1"/>
</dbReference>
<dbReference type="PANTHER" id="PTHR40942">
    <property type="match status" value="1"/>
</dbReference>
<dbReference type="PANTHER" id="PTHR40942:SF4">
    <property type="entry name" value="CYTOCHROME C5"/>
    <property type="match status" value="1"/>
</dbReference>
<dbReference type="Pfam" id="PF00149">
    <property type="entry name" value="Metallophos"/>
    <property type="match status" value="1"/>
</dbReference>
<dbReference type="PIRSF" id="PIRSF000903">
    <property type="entry name" value="B5n-ttraPtase_sm"/>
    <property type="match status" value="1"/>
</dbReference>
<dbReference type="SUPFAM" id="SSF56300">
    <property type="entry name" value="Metallo-dependent phosphatases"/>
    <property type="match status" value="1"/>
</dbReference>
<evidence type="ECO:0000255" key="1">
    <source>
        <dbReference type="HAMAP-Rule" id="MF_00199"/>
    </source>
</evidence>
<evidence type="ECO:0000256" key="2">
    <source>
        <dbReference type="SAM" id="MobiDB-lite"/>
    </source>
</evidence>
<reference key="1">
    <citation type="journal article" date="2002" name="Nature">
        <title>Comparison of the genomes of two Xanthomonas pathogens with differing host specificities.</title>
        <authorList>
            <person name="da Silva A.C.R."/>
            <person name="Ferro J.A."/>
            <person name="Reinach F.C."/>
            <person name="Farah C.S."/>
            <person name="Furlan L.R."/>
            <person name="Quaggio R.B."/>
            <person name="Monteiro-Vitorello C.B."/>
            <person name="Van Sluys M.A."/>
            <person name="Almeida N.F. Jr."/>
            <person name="Alves L.M.C."/>
            <person name="do Amaral A.M."/>
            <person name="Bertolini M.C."/>
            <person name="Camargo L.E.A."/>
            <person name="Camarotte G."/>
            <person name="Cannavan F."/>
            <person name="Cardozo J."/>
            <person name="Chambergo F."/>
            <person name="Ciapina L.P."/>
            <person name="Cicarelli R.M.B."/>
            <person name="Coutinho L.L."/>
            <person name="Cursino-Santos J.R."/>
            <person name="El-Dorry H."/>
            <person name="Faria J.B."/>
            <person name="Ferreira A.J.S."/>
            <person name="Ferreira R.C.C."/>
            <person name="Ferro M.I.T."/>
            <person name="Formighieri E.F."/>
            <person name="Franco M.C."/>
            <person name="Greggio C.C."/>
            <person name="Gruber A."/>
            <person name="Katsuyama A.M."/>
            <person name="Kishi L.T."/>
            <person name="Leite R.P."/>
            <person name="Lemos E.G.M."/>
            <person name="Lemos M.V.F."/>
            <person name="Locali E.C."/>
            <person name="Machado M.A."/>
            <person name="Madeira A.M.B.N."/>
            <person name="Martinez-Rossi N.M."/>
            <person name="Martins E.C."/>
            <person name="Meidanis J."/>
            <person name="Menck C.F.M."/>
            <person name="Miyaki C.Y."/>
            <person name="Moon D.H."/>
            <person name="Moreira L.M."/>
            <person name="Novo M.T.M."/>
            <person name="Okura V.K."/>
            <person name="Oliveira M.C."/>
            <person name="Oliveira V.R."/>
            <person name="Pereira H.A."/>
            <person name="Rossi A."/>
            <person name="Sena J.A.D."/>
            <person name="Silva C."/>
            <person name="de Souza R.F."/>
            <person name="Spinola L.A.F."/>
            <person name="Takita M.A."/>
            <person name="Tamura R.E."/>
            <person name="Teixeira E.C."/>
            <person name="Tezza R.I.D."/>
            <person name="Trindade dos Santos M."/>
            <person name="Truffi D."/>
            <person name="Tsai S.M."/>
            <person name="White F.F."/>
            <person name="Setubal J.C."/>
            <person name="Kitajima J.P."/>
        </authorList>
    </citation>
    <scope>NUCLEOTIDE SEQUENCE [LARGE SCALE GENOMIC DNA]</scope>
    <source>
        <strain>ATCC 33913 / DSM 3586 / NCPPB 528 / LMG 568 / P 25</strain>
    </source>
</reference>
<sequence>MSVWAIGDLQGCYDITQQLLEKIRFDPAQDTLWFCGDLVNRGGQSLETLRLVHSLRAHSVVVLGNHDLSLLAIGARSEEEQRKVNPDLQRIVLAEDRDVLLDWLRMQKLAHVDRELGWMMIHAGLAPKWTTQMAEKHAREVEQQLQGGGYRKLLRNMYGDQPGWSPGLSGYDRSRAIINLFTRMRYCTPRGRIATDDKGTPGTQAQGLYPWFEVPGRVERDLKIVCGHWSALGLTITQGVHAIDTGAVWGGKLTALQLDTDELRVVQVPGREVTAPATAPRAPRRPRERQGRQRARGGRGGGNGNGNGGNAAAPAAAPGDAPQE</sequence>
<name>APAH_XANCP</name>
<proteinExistence type="inferred from homology"/>
<gene>
    <name evidence="1" type="primary">apaH</name>
    <name type="ordered locus">XCC0789</name>
</gene>
<organism>
    <name type="scientific">Xanthomonas campestris pv. campestris (strain ATCC 33913 / DSM 3586 / NCPPB 528 / LMG 568 / P 25)</name>
    <dbReference type="NCBI Taxonomy" id="190485"/>
    <lineage>
        <taxon>Bacteria</taxon>
        <taxon>Pseudomonadati</taxon>
        <taxon>Pseudomonadota</taxon>
        <taxon>Gammaproteobacteria</taxon>
        <taxon>Lysobacterales</taxon>
        <taxon>Lysobacteraceae</taxon>
        <taxon>Xanthomonas</taxon>
    </lineage>
</organism>
<protein>
    <recommendedName>
        <fullName evidence="1">Bis(5'-nucleosyl)-tetraphosphatase, symmetrical</fullName>
        <ecNumber evidence="1">3.6.1.41</ecNumber>
    </recommendedName>
    <alternativeName>
        <fullName evidence="1">Ap4A hydrolase</fullName>
    </alternativeName>
    <alternativeName>
        <fullName evidence="1">Diadenosine 5',5'''-P1,P4-tetraphosphate pyrophosphohydrolase</fullName>
    </alternativeName>
    <alternativeName>
        <fullName evidence="1">Diadenosine tetraphosphatase</fullName>
    </alternativeName>
</protein>
<comment type="function">
    <text evidence="1">Hydrolyzes diadenosine 5',5'''-P1,P4-tetraphosphate to yield ADP.</text>
</comment>
<comment type="catalytic activity">
    <reaction evidence="1">
        <text>P(1),P(4)-bis(5'-adenosyl) tetraphosphate + H2O = 2 ADP + 2 H(+)</text>
        <dbReference type="Rhea" id="RHEA:24252"/>
        <dbReference type="ChEBI" id="CHEBI:15377"/>
        <dbReference type="ChEBI" id="CHEBI:15378"/>
        <dbReference type="ChEBI" id="CHEBI:58141"/>
        <dbReference type="ChEBI" id="CHEBI:456216"/>
        <dbReference type="EC" id="3.6.1.41"/>
    </reaction>
</comment>
<comment type="similarity">
    <text evidence="1">Belongs to the Ap4A hydrolase family.</text>
</comment>
<keyword id="KW-0378">Hydrolase</keyword>
<keyword id="KW-1185">Reference proteome</keyword>
<feature type="chain" id="PRO_0000198018" description="Bis(5'-nucleosyl)-tetraphosphatase, symmetrical">
    <location>
        <begin position="1"/>
        <end position="324"/>
    </location>
</feature>
<feature type="region of interest" description="Disordered" evidence="2">
    <location>
        <begin position="269"/>
        <end position="324"/>
    </location>
</feature>
<feature type="compositionally biased region" description="Basic residues" evidence="2">
    <location>
        <begin position="282"/>
        <end position="297"/>
    </location>
</feature>
<feature type="compositionally biased region" description="Gly residues" evidence="2">
    <location>
        <begin position="298"/>
        <end position="309"/>
    </location>
</feature>
<feature type="compositionally biased region" description="Low complexity" evidence="2">
    <location>
        <begin position="310"/>
        <end position="324"/>
    </location>
</feature>
<accession>Q8PCE5</accession>